<proteinExistence type="evidence at protein level"/>
<dbReference type="EC" id="1.13.11.12" evidence="7"/>
<dbReference type="EMBL" id="AJ302042">
    <property type="protein sequence ID" value="CAC19364.1"/>
    <property type="molecule type" value="mRNA"/>
</dbReference>
<dbReference type="EMBL" id="AC010926">
    <property type="protein sequence ID" value="AAG51846.1"/>
    <property type="molecule type" value="Genomic_DNA"/>
</dbReference>
<dbReference type="EMBL" id="AC016529">
    <property type="protein sequence ID" value="AAG52571.1"/>
    <property type="molecule type" value="Genomic_DNA"/>
</dbReference>
<dbReference type="EMBL" id="CP002684">
    <property type="protein sequence ID" value="AEE35334.1"/>
    <property type="molecule type" value="Genomic_DNA"/>
</dbReference>
<dbReference type="EMBL" id="AY056166">
    <property type="protein sequence ID" value="AAL07015.1"/>
    <property type="molecule type" value="mRNA"/>
</dbReference>
<dbReference type="EMBL" id="AY091193">
    <property type="protein sequence ID" value="AAM14132.1"/>
    <property type="molecule type" value="mRNA"/>
</dbReference>
<dbReference type="PIR" id="E96749">
    <property type="entry name" value="E96749"/>
</dbReference>
<dbReference type="RefSeq" id="NP_177396.1">
    <property type="nucleotide sequence ID" value="NM_105911.5"/>
</dbReference>
<dbReference type="SMR" id="Q9FNX8"/>
<dbReference type="BioGRID" id="28803">
    <property type="interactions" value="1"/>
</dbReference>
<dbReference type="FunCoup" id="Q9FNX8">
    <property type="interactions" value="62"/>
</dbReference>
<dbReference type="STRING" id="3702.Q9FNX8"/>
<dbReference type="SwissLipids" id="SLP:000001765"/>
<dbReference type="GlyGen" id="Q9FNX8">
    <property type="glycosylation" value="1 site"/>
</dbReference>
<dbReference type="PaxDb" id="3702-AT1G72520.1"/>
<dbReference type="ProteomicsDB" id="238497"/>
<dbReference type="EnsemblPlants" id="AT1G72520.1">
    <property type="protein sequence ID" value="AT1G72520.1"/>
    <property type="gene ID" value="AT1G72520"/>
</dbReference>
<dbReference type="GeneID" id="843584"/>
<dbReference type="Gramene" id="AT1G72520.1">
    <property type="protein sequence ID" value="AT1G72520.1"/>
    <property type="gene ID" value="AT1G72520"/>
</dbReference>
<dbReference type="KEGG" id="ath:AT1G72520"/>
<dbReference type="Araport" id="AT1G72520"/>
<dbReference type="TAIR" id="AT1G72520">
    <property type="gene designation" value="LOX4"/>
</dbReference>
<dbReference type="eggNOG" id="ENOG502QQSP">
    <property type="taxonomic scope" value="Eukaryota"/>
</dbReference>
<dbReference type="HOGENOM" id="CLU_004282_0_0_1"/>
<dbReference type="InParanoid" id="Q9FNX8"/>
<dbReference type="OMA" id="PFDPRPM"/>
<dbReference type="PhylomeDB" id="Q9FNX8"/>
<dbReference type="BRENDA" id="1.13.11.12">
    <property type="organism ID" value="399"/>
</dbReference>
<dbReference type="UniPathway" id="UPA00382"/>
<dbReference type="PRO" id="PR:Q9FNX8"/>
<dbReference type="Proteomes" id="UP000006548">
    <property type="component" value="Chromosome 1"/>
</dbReference>
<dbReference type="ExpressionAtlas" id="Q9FNX8">
    <property type="expression patterns" value="baseline and differential"/>
</dbReference>
<dbReference type="GO" id="GO:0009507">
    <property type="term" value="C:chloroplast"/>
    <property type="evidence" value="ECO:0007669"/>
    <property type="project" value="UniProtKB-SubCell"/>
</dbReference>
<dbReference type="GO" id="GO:0016165">
    <property type="term" value="F:linoleate 13S-lipoxygenase activity"/>
    <property type="evidence" value="ECO:0000314"/>
    <property type="project" value="UniProtKB"/>
</dbReference>
<dbReference type="GO" id="GO:0046872">
    <property type="term" value="F:metal ion binding"/>
    <property type="evidence" value="ECO:0007669"/>
    <property type="project" value="UniProtKB-KW"/>
</dbReference>
<dbReference type="GO" id="GO:0009901">
    <property type="term" value="P:anther dehiscence"/>
    <property type="evidence" value="ECO:0000316"/>
    <property type="project" value="TAIR"/>
</dbReference>
<dbReference type="GO" id="GO:0048653">
    <property type="term" value="P:anther development"/>
    <property type="evidence" value="ECO:0000316"/>
    <property type="project" value="TAIR"/>
</dbReference>
<dbReference type="GO" id="GO:0006633">
    <property type="term" value="P:fatty acid biosynthetic process"/>
    <property type="evidence" value="ECO:0007669"/>
    <property type="project" value="UniProtKB-KW"/>
</dbReference>
<dbReference type="GO" id="GO:0034440">
    <property type="term" value="P:lipid oxidation"/>
    <property type="evidence" value="ECO:0000314"/>
    <property type="project" value="TAIR"/>
</dbReference>
<dbReference type="GO" id="GO:0031408">
    <property type="term" value="P:oxylipin biosynthetic process"/>
    <property type="evidence" value="ECO:0007669"/>
    <property type="project" value="UniProtKB-UniPathway"/>
</dbReference>
<dbReference type="GO" id="GO:0009555">
    <property type="term" value="P:pollen development"/>
    <property type="evidence" value="ECO:0000316"/>
    <property type="project" value="TAIR"/>
</dbReference>
<dbReference type="GO" id="GO:0009617">
    <property type="term" value="P:response to bacterium"/>
    <property type="evidence" value="ECO:0000270"/>
    <property type="project" value="UniProtKB"/>
</dbReference>
<dbReference type="GO" id="GO:0010193">
    <property type="term" value="P:response to ozone"/>
    <property type="evidence" value="ECO:0000270"/>
    <property type="project" value="UniProtKB"/>
</dbReference>
<dbReference type="GO" id="GO:0009611">
    <property type="term" value="P:response to wounding"/>
    <property type="evidence" value="ECO:0000270"/>
    <property type="project" value="UniProtKB"/>
</dbReference>
<dbReference type="GO" id="GO:0080086">
    <property type="term" value="P:stamen filament development"/>
    <property type="evidence" value="ECO:0000316"/>
    <property type="project" value="TAIR"/>
</dbReference>
<dbReference type="CDD" id="cd01751">
    <property type="entry name" value="PLAT_LH2"/>
    <property type="match status" value="1"/>
</dbReference>
<dbReference type="FunFam" id="1.20.245.10:FF:000002">
    <property type="entry name" value="Lipoxygenase"/>
    <property type="match status" value="1"/>
</dbReference>
<dbReference type="FunFam" id="2.60.60.20:FF:000018">
    <property type="entry name" value="Lipoxygenase"/>
    <property type="match status" value="1"/>
</dbReference>
<dbReference type="FunFam" id="3.10.450.60:FF:000002">
    <property type="entry name" value="Lipoxygenase"/>
    <property type="match status" value="1"/>
</dbReference>
<dbReference type="FunFam" id="4.10.372.10:FF:000001">
    <property type="entry name" value="Lipoxygenase"/>
    <property type="match status" value="1"/>
</dbReference>
<dbReference type="FunFam" id="4.10.375.10:FF:000001">
    <property type="entry name" value="Lipoxygenase"/>
    <property type="match status" value="1"/>
</dbReference>
<dbReference type="Gene3D" id="3.10.450.60">
    <property type="match status" value="1"/>
</dbReference>
<dbReference type="Gene3D" id="4.10.375.10">
    <property type="entry name" value="Lipoxygenase-1, Domain 2"/>
    <property type="match status" value="1"/>
</dbReference>
<dbReference type="Gene3D" id="4.10.372.10">
    <property type="entry name" value="Lipoxygenase-1, Domain 3"/>
    <property type="match status" value="1"/>
</dbReference>
<dbReference type="Gene3D" id="1.20.245.10">
    <property type="entry name" value="Lipoxygenase-1, Domain 5"/>
    <property type="match status" value="1"/>
</dbReference>
<dbReference type="Gene3D" id="2.60.60.20">
    <property type="entry name" value="PLAT/LH2 domain"/>
    <property type="match status" value="1"/>
</dbReference>
<dbReference type="InterPro" id="IPR000907">
    <property type="entry name" value="LipOase"/>
</dbReference>
<dbReference type="InterPro" id="IPR013819">
    <property type="entry name" value="LipOase_C"/>
</dbReference>
<dbReference type="InterPro" id="IPR036226">
    <property type="entry name" value="LipOase_C_sf"/>
</dbReference>
<dbReference type="InterPro" id="IPR020834">
    <property type="entry name" value="LipOase_CS"/>
</dbReference>
<dbReference type="InterPro" id="IPR020833">
    <property type="entry name" value="LipOase_Fe_BS"/>
</dbReference>
<dbReference type="InterPro" id="IPR001246">
    <property type="entry name" value="LipOase_plant"/>
</dbReference>
<dbReference type="InterPro" id="IPR042057">
    <property type="entry name" value="Lipoxy_PLAT/LH2"/>
</dbReference>
<dbReference type="InterPro" id="IPR027433">
    <property type="entry name" value="Lipoxygenase_dom_3"/>
</dbReference>
<dbReference type="InterPro" id="IPR001024">
    <property type="entry name" value="PLAT/LH2_dom"/>
</dbReference>
<dbReference type="InterPro" id="IPR036392">
    <property type="entry name" value="PLAT/LH2_dom_sf"/>
</dbReference>
<dbReference type="PANTHER" id="PTHR11771">
    <property type="entry name" value="LIPOXYGENASE"/>
    <property type="match status" value="1"/>
</dbReference>
<dbReference type="Pfam" id="PF00305">
    <property type="entry name" value="Lipoxygenase"/>
    <property type="match status" value="1"/>
</dbReference>
<dbReference type="Pfam" id="PF01477">
    <property type="entry name" value="PLAT"/>
    <property type="match status" value="1"/>
</dbReference>
<dbReference type="PRINTS" id="PR00087">
    <property type="entry name" value="LIPOXYGENASE"/>
</dbReference>
<dbReference type="PRINTS" id="PR00468">
    <property type="entry name" value="PLTLPOXGNASE"/>
</dbReference>
<dbReference type="SMART" id="SM00308">
    <property type="entry name" value="LH2"/>
    <property type="match status" value="1"/>
</dbReference>
<dbReference type="SUPFAM" id="SSF49723">
    <property type="entry name" value="Lipase/lipooxygenase domain (PLAT/LH2 domain)"/>
    <property type="match status" value="1"/>
</dbReference>
<dbReference type="SUPFAM" id="SSF48484">
    <property type="entry name" value="Lipoxigenase"/>
    <property type="match status" value="1"/>
</dbReference>
<dbReference type="PROSITE" id="PS00711">
    <property type="entry name" value="LIPOXYGENASE_1"/>
    <property type="match status" value="1"/>
</dbReference>
<dbReference type="PROSITE" id="PS00081">
    <property type="entry name" value="LIPOXYGENASE_2"/>
    <property type="match status" value="1"/>
</dbReference>
<dbReference type="PROSITE" id="PS51393">
    <property type="entry name" value="LIPOXYGENASE_3"/>
    <property type="match status" value="1"/>
</dbReference>
<dbReference type="PROSITE" id="PS50095">
    <property type="entry name" value="PLAT"/>
    <property type="match status" value="1"/>
</dbReference>
<reference key="1">
    <citation type="submission" date="2000-12" db="EMBL/GenBank/DDBJ databases">
        <title>AtLOX4, the third chloroplastic jasmonate-inducible 13-LOX from Arabidopsis leaves.</title>
        <authorList>
            <person name="Kunze S."/>
            <person name="Fritsche K."/>
            <person name="Feussner I."/>
        </authorList>
    </citation>
    <scope>NUCLEOTIDE SEQUENCE [MRNA]</scope>
    <source>
        <tissue>Leaf</tissue>
    </source>
</reference>
<reference key="2">
    <citation type="journal article" date="2000" name="Nature">
        <title>Sequence and analysis of chromosome 1 of the plant Arabidopsis thaliana.</title>
        <authorList>
            <person name="Theologis A."/>
            <person name="Ecker J.R."/>
            <person name="Palm C.J."/>
            <person name="Federspiel N.A."/>
            <person name="Kaul S."/>
            <person name="White O."/>
            <person name="Alonso J."/>
            <person name="Altafi H."/>
            <person name="Araujo R."/>
            <person name="Bowman C.L."/>
            <person name="Brooks S.Y."/>
            <person name="Buehler E."/>
            <person name="Chan A."/>
            <person name="Chao Q."/>
            <person name="Chen H."/>
            <person name="Cheuk R.F."/>
            <person name="Chin C.W."/>
            <person name="Chung M.K."/>
            <person name="Conn L."/>
            <person name="Conway A.B."/>
            <person name="Conway A.R."/>
            <person name="Creasy T.H."/>
            <person name="Dewar K."/>
            <person name="Dunn P."/>
            <person name="Etgu P."/>
            <person name="Feldblyum T.V."/>
            <person name="Feng J.-D."/>
            <person name="Fong B."/>
            <person name="Fujii C.Y."/>
            <person name="Gill J.E."/>
            <person name="Goldsmith A.D."/>
            <person name="Haas B."/>
            <person name="Hansen N.F."/>
            <person name="Hughes B."/>
            <person name="Huizar L."/>
            <person name="Hunter J.L."/>
            <person name="Jenkins J."/>
            <person name="Johnson-Hopson C."/>
            <person name="Khan S."/>
            <person name="Khaykin E."/>
            <person name="Kim C.J."/>
            <person name="Koo H.L."/>
            <person name="Kremenetskaia I."/>
            <person name="Kurtz D.B."/>
            <person name="Kwan A."/>
            <person name="Lam B."/>
            <person name="Langin-Hooper S."/>
            <person name="Lee A."/>
            <person name="Lee J.M."/>
            <person name="Lenz C.A."/>
            <person name="Li J.H."/>
            <person name="Li Y.-P."/>
            <person name="Lin X."/>
            <person name="Liu S.X."/>
            <person name="Liu Z.A."/>
            <person name="Luros J.S."/>
            <person name="Maiti R."/>
            <person name="Marziali A."/>
            <person name="Militscher J."/>
            <person name="Miranda M."/>
            <person name="Nguyen M."/>
            <person name="Nierman W.C."/>
            <person name="Osborne B.I."/>
            <person name="Pai G."/>
            <person name="Peterson J."/>
            <person name="Pham P.K."/>
            <person name="Rizzo M."/>
            <person name="Rooney T."/>
            <person name="Rowley D."/>
            <person name="Sakano H."/>
            <person name="Salzberg S.L."/>
            <person name="Schwartz J.R."/>
            <person name="Shinn P."/>
            <person name="Southwick A.M."/>
            <person name="Sun H."/>
            <person name="Tallon L.J."/>
            <person name="Tambunga G."/>
            <person name="Toriumi M.J."/>
            <person name="Town C.D."/>
            <person name="Utterback T."/>
            <person name="Van Aken S."/>
            <person name="Vaysberg M."/>
            <person name="Vysotskaia V.S."/>
            <person name="Walker M."/>
            <person name="Wu D."/>
            <person name="Yu G."/>
            <person name="Fraser C.M."/>
            <person name="Venter J.C."/>
            <person name="Davis R.W."/>
        </authorList>
    </citation>
    <scope>NUCLEOTIDE SEQUENCE [LARGE SCALE GENOMIC DNA]</scope>
    <source>
        <strain>cv. Columbia</strain>
    </source>
</reference>
<reference key="3">
    <citation type="journal article" date="2017" name="Plant J.">
        <title>Araport11: a complete reannotation of the Arabidopsis thaliana reference genome.</title>
        <authorList>
            <person name="Cheng C.Y."/>
            <person name="Krishnakumar V."/>
            <person name="Chan A.P."/>
            <person name="Thibaud-Nissen F."/>
            <person name="Schobel S."/>
            <person name="Town C.D."/>
        </authorList>
    </citation>
    <scope>GENOME REANNOTATION</scope>
    <source>
        <strain>cv. Columbia</strain>
    </source>
</reference>
<reference key="4">
    <citation type="journal article" date="2003" name="Science">
        <title>Empirical analysis of transcriptional activity in the Arabidopsis genome.</title>
        <authorList>
            <person name="Yamada K."/>
            <person name="Lim J."/>
            <person name="Dale J.M."/>
            <person name="Chen H."/>
            <person name="Shinn P."/>
            <person name="Palm C.J."/>
            <person name="Southwick A.M."/>
            <person name="Wu H.C."/>
            <person name="Kim C.J."/>
            <person name="Nguyen M."/>
            <person name="Pham P.K."/>
            <person name="Cheuk R.F."/>
            <person name="Karlin-Newmann G."/>
            <person name="Liu S.X."/>
            <person name="Lam B."/>
            <person name="Sakano H."/>
            <person name="Wu T."/>
            <person name="Yu G."/>
            <person name="Miranda M."/>
            <person name="Quach H.L."/>
            <person name="Tripp M."/>
            <person name="Chang C.H."/>
            <person name="Lee J.M."/>
            <person name="Toriumi M.J."/>
            <person name="Chan M.M."/>
            <person name="Tang C.C."/>
            <person name="Onodera C.S."/>
            <person name="Deng J.M."/>
            <person name="Akiyama K."/>
            <person name="Ansari Y."/>
            <person name="Arakawa T."/>
            <person name="Banh J."/>
            <person name="Banno F."/>
            <person name="Bowser L."/>
            <person name="Brooks S.Y."/>
            <person name="Carninci P."/>
            <person name="Chao Q."/>
            <person name="Choy N."/>
            <person name="Enju A."/>
            <person name="Goldsmith A.D."/>
            <person name="Gurjal M."/>
            <person name="Hansen N.F."/>
            <person name="Hayashizaki Y."/>
            <person name="Johnson-Hopson C."/>
            <person name="Hsuan V.W."/>
            <person name="Iida K."/>
            <person name="Karnes M."/>
            <person name="Khan S."/>
            <person name="Koesema E."/>
            <person name="Ishida J."/>
            <person name="Jiang P.X."/>
            <person name="Jones T."/>
            <person name="Kawai J."/>
            <person name="Kamiya A."/>
            <person name="Meyers C."/>
            <person name="Nakajima M."/>
            <person name="Narusaka M."/>
            <person name="Seki M."/>
            <person name="Sakurai T."/>
            <person name="Satou M."/>
            <person name="Tamse R."/>
            <person name="Vaysberg M."/>
            <person name="Wallender E.K."/>
            <person name="Wong C."/>
            <person name="Yamamura Y."/>
            <person name="Yuan S."/>
            <person name="Shinozaki K."/>
            <person name="Davis R.W."/>
            <person name="Theologis A."/>
            <person name="Ecker J.R."/>
        </authorList>
    </citation>
    <scope>NUCLEOTIDE SEQUENCE [LARGE SCALE MRNA]</scope>
    <source>
        <strain>cv. Columbia</strain>
    </source>
</reference>
<reference key="5">
    <citation type="journal article" date="2002" name="Plant Physiol.">
        <title>Evidence supporting a role of jasmonic acid in Arabidopsis leaf senescence.</title>
        <authorList>
            <person name="He Y."/>
            <person name="Fukushige H."/>
            <person name="Hildebrand D.F."/>
            <person name="Gan S."/>
        </authorList>
    </citation>
    <scope>DEVELOPMENTAL STAGE</scope>
</reference>
<reference key="6">
    <citation type="journal article" date="2003" name="Plant J.">
        <title>Expression profiling of the host response to bacterial infection: the transition from basal to induced defence responses in RPM1-mediated resistance.</title>
        <authorList>
            <person name="de Torres M."/>
            <person name="Sanchez P."/>
            <person name="Fernandez-Delmond I."/>
            <person name="Grant M."/>
        </authorList>
    </citation>
    <scope>INDUCTION BY BACTERIAL PATHOGENS AND WOUNDING</scope>
</reference>
<reference key="7">
    <citation type="journal article" date="2007" name="Plant Cell">
        <title>Oxylipins produced by the 9-lipoxygenase pathway in Arabidopsis regulate lateral root development and defense responses through a specific signaling cascade.</title>
        <authorList>
            <person name="Vellosillo T."/>
            <person name="Martinez M."/>
            <person name="Lopez M.A."/>
            <person name="Vicente J."/>
            <person name="Cascon T."/>
            <person name="Dolan L."/>
            <person name="Hamberg M."/>
            <person name="Castresana C."/>
        </authorList>
    </citation>
    <scope>TISSUE SPECIFICITY</scope>
</reference>
<reference key="8">
    <citation type="journal article" date="2009" name="Plant J.">
        <title>Nitric oxide modulates ozone-induced cell death, hormone biosynthesis and gene expression in Arabidopsis thaliana.</title>
        <authorList>
            <person name="Ahlfors R."/>
            <person name="Brosche M."/>
            <person name="Kollist H."/>
            <person name="Kangasjaervi J."/>
        </authorList>
    </citation>
    <scope>INDUCTION BY OZONE</scope>
</reference>
<reference key="9">
    <citation type="journal article" date="2009" name="Lipids">
        <title>Diversity of the enzymatic activity in the lipoxygenase gene family of Arabidopsis thaliana.</title>
        <authorList>
            <person name="Bannenberg G."/>
            <person name="Martinez M."/>
            <person name="Hamberg M."/>
            <person name="Castresana C."/>
        </authorList>
    </citation>
    <scope>FUNCTION</scope>
    <scope>CATALYTIC ACTIVITY</scope>
</reference>
<gene>
    <name type="primary">LOX4</name>
    <name type="synonym">LOX3</name>
    <name type="ordered locus">At1g72520</name>
    <name type="ORF">F28P22.29</name>
    <name type="ORF">T10D10.1</name>
</gene>
<comment type="function">
    <text evidence="3 7">Plant lipoxygenases may be involved in a number of diverse aspects of plant physiology including growth and development, pest resistance, and senescence or responses to wounding. Catalyzes the hydroperoxidation of lipids containing a cis,cis-1,4-pentadiene structure (By similarity). 13S-lipoxygenase that can use linolenic acid as substrates.</text>
</comment>
<comment type="catalytic activity">
    <reaction evidence="7">
        <text>(9Z,12Z)-octadecadienoate + O2 = (13S)-hydroperoxy-(9Z,11E)-octadecadienoate</text>
        <dbReference type="Rhea" id="RHEA:22780"/>
        <dbReference type="ChEBI" id="CHEBI:15379"/>
        <dbReference type="ChEBI" id="CHEBI:30245"/>
        <dbReference type="ChEBI" id="CHEBI:57466"/>
        <dbReference type="EC" id="1.13.11.12"/>
    </reaction>
</comment>
<comment type="catalytic activity">
    <reaction evidence="7">
        <text>(9Z,12Z,15Z)-octadecatrienoate + O2 = (13S)-hydroperoxy-(9Z,11E,15Z)-octadecatrienoate</text>
        <dbReference type="Rhea" id="RHEA:34495"/>
        <dbReference type="ChEBI" id="CHEBI:15379"/>
        <dbReference type="ChEBI" id="CHEBI:32387"/>
        <dbReference type="ChEBI" id="CHEBI:58757"/>
        <dbReference type="EC" id="1.13.11.12"/>
    </reaction>
</comment>
<comment type="cofactor">
    <cofactor evidence="3">
        <name>Fe cation</name>
        <dbReference type="ChEBI" id="CHEBI:24875"/>
    </cofactor>
    <text evidence="3">Binds 1 Fe cation per subunit.</text>
</comment>
<comment type="pathway">
    <text evidence="3">Lipid metabolism; oxylipin biosynthesis.</text>
</comment>
<comment type="subcellular location">
    <subcellularLocation>
        <location evidence="9">Plastid</location>
        <location evidence="9">Chloroplast</location>
    </subcellularLocation>
</comment>
<comment type="tissue specificity">
    <text evidence="6">Expressed in leaves.</text>
</comment>
<comment type="developmental stage">
    <text evidence="4">Expression is greatly increased in leaves during leaf senescence.</text>
</comment>
<comment type="induction">
    <text evidence="5 8">Induced by bacterial pathogens (e.g. Pseudomonas syringae pv. tomato), ozone O(3), and wounding.</text>
</comment>
<comment type="similarity">
    <text evidence="9">Belongs to the lipoxygenase family.</text>
</comment>
<accession>Q9FNX8</accession>
<accession>Q9CAG9</accession>
<name>LOX4_ARATH</name>
<protein>
    <recommendedName>
        <fullName>Lipoxygenase 4, chloroplastic</fullName>
        <shortName>AtLOX4</shortName>
        <ecNumber evidence="7">1.13.11.12</ecNumber>
    </recommendedName>
    <alternativeName>
        <fullName>LOX3-like protein</fullName>
    </alternativeName>
</protein>
<sequence>MALANEIMGSRLIFERSSSLASPFHSRFSIKKKTQRTQFSINPFDPRPMRAVNSSGVVAAISEDLVKTLRISTVGRKQEKEEEEEKSVKFKVRAVATVRNKNKEDFKETLVKHLDAFTDKIGRNVVLELMSTQVDPKTNEPKKSKAAVLKDWSKKSNSKAERVHYTAEFTVDSAFGSPGAITVTNKHQKEFFLESITIEGFACGPVHFPCNSWVQSQKDHPSKRILFTNQPYLPSETPSGLRTLREKELENLRGNGKGERKLSDRIYDYDVYNDIGNPDISRELARPTLGGREFPYPRRCRTGRSSTDTDMMSERRVEKPLPMYVPRDEQFEESKQNTFAACRLKAVLHNLIPSLKASILAEDFANFGEIDSLYKEGLLLKLGFQDDMFKKFPLPKIVTTLQKSSEGLLRYDTPKIVSKDKYAWLRDDEFARQAIAGINPVNIERVTSYPPVSNLDPEIYGPGLHSALTEDHIIGQLDGLTVQQALETNRLFMVDYHDIYLPFLDRINALDGRKAYATRTILFLTRLGTLKPIAIELSLPSQSSSNQKSKRVVTPPVDATSNWMWQLAKAHVGSNDAGVHQLVNHWLRTHACLEPFILAAHRQLSAMHPIFKLLDPHMRYTLEINAVARQTLISADGVIESCFTAGQYGLEISSAAYKNKWRFDMEGLPADLIRRGMAVPDPTQPHGLKLLVEDYPYANDGLLLWSAIQTWVRTYVERYYANSNLIQTDTELQAWYSESINVGHADHRDAEWWPKLSTVEDLVSVITTIIWLASAQHAALNFGQYPYGGYVPNRPPLMRRLIPDESDPEFTSFIEDPQKYFFSSMPSLLQTTKFMAVVDTLSTHSPDEEYIGERQQPSIWTGDAEIVDAFYGFSAEIGRIEKEIDKRNRDPSRRNRCGAGVLPYELMAPSSEPGVTCRGVPNSVSI</sequence>
<organism>
    <name type="scientific">Arabidopsis thaliana</name>
    <name type="common">Mouse-ear cress</name>
    <dbReference type="NCBI Taxonomy" id="3702"/>
    <lineage>
        <taxon>Eukaryota</taxon>
        <taxon>Viridiplantae</taxon>
        <taxon>Streptophyta</taxon>
        <taxon>Embryophyta</taxon>
        <taxon>Tracheophyta</taxon>
        <taxon>Spermatophyta</taxon>
        <taxon>Magnoliopsida</taxon>
        <taxon>eudicotyledons</taxon>
        <taxon>Gunneridae</taxon>
        <taxon>Pentapetalae</taxon>
        <taxon>rosids</taxon>
        <taxon>malvids</taxon>
        <taxon>Brassicales</taxon>
        <taxon>Brassicaceae</taxon>
        <taxon>Camelineae</taxon>
        <taxon>Arabidopsis</taxon>
    </lineage>
</organism>
<evidence type="ECO:0000255" key="1"/>
<evidence type="ECO:0000255" key="2">
    <source>
        <dbReference type="PROSITE-ProRule" id="PRU00152"/>
    </source>
</evidence>
<evidence type="ECO:0000255" key="3">
    <source>
        <dbReference type="PROSITE-ProRule" id="PRU00726"/>
    </source>
</evidence>
<evidence type="ECO:0000269" key="4">
    <source>
    </source>
</evidence>
<evidence type="ECO:0000269" key="5">
    <source>
    </source>
</evidence>
<evidence type="ECO:0000269" key="6">
    <source>
    </source>
</evidence>
<evidence type="ECO:0000269" key="7">
    <source>
    </source>
</evidence>
<evidence type="ECO:0000269" key="8">
    <source>
    </source>
</evidence>
<evidence type="ECO:0000305" key="9"/>
<keyword id="KW-0150">Chloroplast</keyword>
<keyword id="KW-0223">Dioxygenase</keyword>
<keyword id="KW-0275">Fatty acid biosynthesis</keyword>
<keyword id="KW-0276">Fatty acid metabolism</keyword>
<keyword id="KW-0408">Iron</keyword>
<keyword id="KW-0444">Lipid biosynthesis</keyword>
<keyword id="KW-0443">Lipid metabolism</keyword>
<keyword id="KW-0479">Metal-binding</keyword>
<keyword id="KW-0560">Oxidoreductase</keyword>
<keyword id="KW-0925">Oxylipin biosynthesis</keyword>
<keyword id="KW-0934">Plastid</keyword>
<keyword id="KW-1185">Reference proteome</keyword>
<keyword id="KW-0809">Transit peptide</keyword>
<feature type="transit peptide" description="Chloroplast" evidence="1">
    <location>
        <begin position="1"/>
        <end position="58"/>
    </location>
</feature>
<feature type="chain" id="PRO_0000380593" description="Lipoxygenase 4, chloroplastic">
    <location>
        <begin position="59"/>
        <end position="926"/>
    </location>
</feature>
<feature type="domain" description="PLAT" evidence="2">
    <location>
        <begin position="106"/>
        <end position="228"/>
    </location>
</feature>
<feature type="domain" description="Lipoxygenase" evidence="3">
    <location>
        <begin position="231"/>
        <end position="926"/>
    </location>
</feature>
<feature type="binding site" evidence="3">
    <location>
        <position position="585"/>
    </location>
    <ligand>
        <name>Fe cation</name>
        <dbReference type="ChEBI" id="CHEBI:24875"/>
        <note>catalytic</note>
    </ligand>
</feature>
<feature type="binding site" evidence="3">
    <location>
        <position position="590"/>
    </location>
    <ligand>
        <name>Fe cation</name>
        <dbReference type="ChEBI" id="CHEBI:24875"/>
        <note>catalytic</note>
    </ligand>
</feature>
<feature type="binding site" evidence="3">
    <location>
        <position position="777"/>
    </location>
    <ligand>
        <name>Fe cation</name>
        <dbReference type="ChEBI" id="CHEBI:24875"/>
        <note>catalytic</note>
    </ligand>
</feature>
<feature type="binding site" evidence="3">
    <location>
        <position position="781"/>
    </location>
    <ligand>
        <name>Fe cation</name>
        <dbReference type="ChEBI" id="CHEBI:24875"/>
        <note>catalytic</note>
    </ligand>
</feature>
<feature type="binding site" evidence="3">
    <location>
        <position position="926"/>
    </location>
    <ligand>
        <name>Fe cation</name>
        <dbReference type="ChEBI" id="CHEBI:24875"/>
        <note>catalytic</note>
    </ligand>
</feature>